<proteinExistence type="inferred from homology"/>
<organism>
    <name type="scientific">Chlamydia muridarum (strain MoPn / Nigg)</name>
    <dbReference type="NCBI Taxonomy" id="243161"/>
    <lineage>
        <taxon>Bacteria</taxon>
        <taxon>Pseudomonadati</taxon>
        <taxon>Chlamydiota</taxon>
        <taxon>Chlamydiia</taxon>
        <taxon>Chlamydiales</taxon>
        <taxon>Chlamydiaceae</taxon>
        <taxon>Chlamydia/Chlamydophila group</taxon>
        <taxon>Chlamydia</taxon>
    </lineage>
</organism>
<name>OMPX_CHLMU</name>
<sequence>MGKTKKRKQSITLIEMMVVITLIGIISGALAFNMRGSLQKGKVFQTEQNCARVYDVLMMEYASGNLSLKEVIANKETLLDNSAWCKEGKKLLKDAWGEDLIVKMNDRGDDIVVLSKKLKSEQRG</sequence>
<accession>Q9PJH1</accession>
<dbReference type="EMBL" id="AE002160">
    <property type="protein sequence ID" value="AAF39654.1"/>
    <property type="molecule type" value="Genomic_DNA"/>
</dbReference>
<dbReference type="PIR" id="A81657">
    <property type="entry name" value="A81657"/>
</dbReference>
<dbReference type="KEGG" id="cmu:TC_0858"/>
<dbReference type="eggNOG" id="COG2165">
    <property type="taxonomic scope" value="Bacteria"/>
</dbReference>
<dbReference type="HOGENOM" id="CLU_156557_0_0_0"/>
<dbReference type="OrthoDB" id="18791at2"/>
<dbReference type="Proteomes" id="UP000000800">
    <property type="component" value="Chromosome"/>
</dbReference>
<dbReference type="GO" id="GO:0009279">
    <property type="term" value="C:cell outer membrane"/>
    <property type="evidence" value="ECO:0007669"/>
    <property type="project" value="UniProtKB-SubCell"/>
</dbReference>
<dbReference type="Gene3D" id="3.30.700.10">
    <property type="entry name" value="Glycoprotein, Type 4 Pilin"/>
    <property type="match status" value="1"/>
</dbReference>
<dbReference type="InterPro" id="IPR012902">
    <property type="entry name" value="N_methyl_site"/>
</dbReference>
<dbReference type="InterPro" id="IPR045584">
    <property type="entry name" value="Pilin-like"/>
</dbReference>
<dbReference type="NCBIfam" id="TIGR02532">
    <property type="entry name" value="IV_pilin_GFxxxE"/>
    <property type="match status" value="1"/>
</dbReference>
<dbReference type="Pfam" id="PF07963">
    <property type="entry name" value="N_methyl"/>
    <property type="match status" value="1"/>
</dbReference>
<dbReference type="SUPFAM" id="SSF54523">
    <property type="entry name" value="Pili subunits"/>
    <property type="match status" value="1"/>
</dbReference>
<protein>
    <recommendedName>
        <fullName>Putative outer membrane protein TC_0858</fullName>
    </recommendedName>
</protein>
<reference key="1">
    <citation type="journal article" date="2000" name="Nucleic Acids Res.">
        <title>Genome sequences of Chlamydia trachomatis MoPn and Chlamydia pneumoniae AR39.</title>
        <authorList>
            <person name="Read T.D."/>
            <person name="Brunham R.C."/>
            <person name="Shen C."/>
            <person name="Gill S.R."/>
            <person name="Heidelberg J.F."/>
            <person name="White O."/>
            <person name="Hickey E.K."/>
            <person name="Peterson J.D."/>
            <person name="Utterback T.R."/>
            <person name="Berry K.J."/>
            <person name="Bass S."/>
            <person name="Linher K.D."/>
            <person name="Weidman J.F."/>
            <person name="Khouri H.M."/>
            <person name="Craven B."/>
            <person name="Bowman C."/>
            <person name="Dodson R.J."/>
            <person name="Gwinn M.L."/>
            <person name="Nelson W.C."/>
            <person name="DeBoy R.T."/>
            <person name="Kolonay J.F."/>
            <person name="McClarty G."/>
            <person name="Salzberg S.L."/>
            <person name="Eisen J.A."/>
            <person name="Fraser C.M."/>
        </authorList>
    </citation>
    <scope>NUCLEOTIDE SEQUENCE [LARGE SCALE GENOMIC DNA]</scope>
    <source>
        <strain>MoPn / Nigg</strain>
    </source>
</reference>
<comment type="subcellular location">
    <subcellularLocation>
        <location evidence="2">Cell outer membrane</location>
        <topology evidence="2">Peripheral membrane protein</topology>
    </subcellularLocation>
</comment>
<evidence type="ECO:0000255" key="1"/>
<evidence type="ECO:0000305" key="2"/>
<keyword id="KW-0998">Cell outer membrane</keyword>
<keyword id="KW-0472">Membrane</keyword>
<keyword id="KW-0732">Signal</keyword>
<feature type="signal peptide" evidence="1">
    <location>
        <begin position="1"/>
        <end position="31"/>
    </location>
</feature>
<feature type="chain" id="PRO_0000020157" description="Putative outer membrane protein TC_0858">
    <location>
        <begin position="32"/>
        <end position="124"/>
    </location>
</feature>
<gene>
    <name type="ordered locus">TC_0858</name>
</gene>